<gene>
    <name evidence="1" type="primary">rplN</name>
    <name type="ordered locus">ECSE_3585</name>
</gene>
<evidence type="ECO:0000255" key="1">
    <source>
        <dbReference type="HAMAP-Rule" id="MF_01367"/>
    </source>
</evidence>
<evidence type="ECO:0000305" key="2"/>
<keyword id="KW-0687">Ribonucleoprotein</keyword>
<keyword id="KW-0689">Ribosomal protein</keyword>
<keyword id="KW-0694">RNA-binding</keyword>
<keyword id="KW-0699">rRNA-binding</keyword>
<feature type="chain" id="PRO_1000144268" description="Large ribosomal subunit protein uL14">
    <location>
        <begin position="1"/>
        <end position="123"/>
    </location>
</feature>
<accession>B6I224</accession>
<proteinExistence type="inferred from homology"/>
<sequence length="123" mass="13541">MIQEQTMLNVADNSGARRVMCIKVLGGSHRRYAGVGDIIKITIKEAIPRGKVKKGDVLKAVVVRTKKGVRRPDGSVIRFDGNACVLLNNNSEQPIGTRIFGPVTRELRSEKFMKIISLAPEVL</sequence>
<organism>
    <name type="scientific">Escherichia coli (strain SE11)</name>
    <dbReference type="NCBI Taxonomy" id="409438"/>
    <lineage>
        <taxon>Bacteria</taxon>
        <taxon>Pseudomonadati</taxon>
        <taxon>Pseudomonadota</taxon>
        <taxon>Gammaproteobacteria</taxon>
        <taxon>Enterobacterales</taxon>
        <taxon>Enterobacteriaceae</taxon>
        <taxon>Escherichia</taxon>
    </lineage>
</organism>
<dbReference type="EMBL" id="AP009240">
    <property type="protein sequence ID" value="BAG79109.1"/>
    <property type="molecule type" value="Genomic_DNA"/>
</dbReference>
<dbReference type="RefSeq" id="WP_000613955.1">
    <property type="nucleotide sequence ID" value="NC_011415.1"/>
</dbReference>
<dbReference type="SMR" id="B6I224"/>
<dbReference type="GeneID" id="93778677"/>
<dbReference type="KEGG" id="ecy:ECSE_3585"/>
<dbReference type="HOGENOM" id="CLU_095071_2_1_6"/>
<dbReference type="Proteomes" id="UP000008199">
    <property type="component" value="Chromosome"/>
</dbReference>
<dbReference type="GO" id="GO:0022625">
    <property type="term" value="C:cytosolic large ribosomal subunit"/>
    <property type="evidence" value="ECO:0007669"/>
    <property type="project" value="TreeGrafter"/>
</dbReference>
<dbReference type="GO" id="GO:0070180">
    <property type="term" value="F:large ribosomal subunit rRNA binding"/>
    <property type="evidence" value="ECO:0007669"/>
    <property type="project" value="TreeGrafter"/>
</dbReference>
<dbReference type="GO" id="GO:0003735">
    <property type="term" value="F:structural constituent of ribosome"/>
    <property type="evidence" value="ECO:0007669"/>
    <property type="project" value="InterPro"/>
</dbReference>
<dbReference type="GO" id="GO:0006412">
    <property type="term" value="P:translation"/>
    <property type="evidence" value="ECO:0007669"/>
    <property type="project" value="UniProtKB-UniRule"/>
</dbReference>
<dbReference type="CDD" id="cd00337">
    <property type="entry name" value="Ribosomal_uL14"/>
    <property type="match status" value="1"/>
</dbReference>
<dbReference type="FunFam" id="2.40.150.20:FF:000001">
    <property type="entry name" value="50S ribosomal protein L14"/>
    <property type="match status" value="1"/>
</dbReference>
<dbReference type="Gene3D" id="2.40.150.20">
    <property type="entry name" value="Ribosomal protein L14"/>
    <property type="match status" value="1"/>
</dbReference>
<dbReference type="HAMAP" id="MF_01367">
    <property type="entry name" value="Ribosomal_uL14"/>
    <property type="match status" value="1"/>
</dbReference>
<dbReference type="InterPro" id="IPR000218">
    <property type="entry name" value="Ribosomal_uL14"/>
</dbReference>
<dbReference type="InterPro" id="IPR005745">
    <property type="entry name" value="Ribosomal_uL14_bac-type"/>
</dbReference>
<dbReference type="InterPro" id="IPR019972">
    <property type="entry name" value="Ribosomal_uL14_CS"/>
</dbReference>
<dbReference type="InterPro" id="IPR036853">
    <property type="entry name" value="Ribosomal_uL14_sf"/>
</dbReference>
<dbReference type="NCBIfam" id="TIGR01067">
    <property type="entry name" value="rplN_bact"/>
    <property type="match status" value="1"/>
</dbReference>
<dbReference type="PANTHER" id="PTHR11761">
    <property type="entry name" value="50S/60S RIBOSOMAL PROTEIN L14/L23"/>
    <property type="match status" value="1"/>
</dbReference>
<dbReference type="PANTHER" id="PTHR11761:SF3">
    <property type="entry name" value="LARGE RIBOSOMAL SUBUNIT PROTEIN UL14M"/>
    <property type="match status" value="1"/>
</dbReference>
<dbReference type="Pfam" id="PF00238">
    <property type="entry name" value="Ribosomal_L14"/>
    <property type="match status" value="1"/>
</dbReference>
<dbReference type="SMART" id="SM01374">
    <property type="entry name" value="Ribosomal_L14"/>
    <property type="match status" value="1"/>
</dbReference>
<dbReference type="SUPFAM" id="SSF50193">
    <property type="entry name" value="Ribosomal protein L14"/>
    <property type="match status" value="1"/>
</dbReference>
<dbReference type="PROSITE" id="PS00049">
    <property type="entry name" value="RIBOSOMAL_L14"/>
    <property type="match status" value="1"/>
</dbReference>
<protein>
    <recommendedName>
        <fullName evidence="1">Large ribosomal subunit protein uL14</fullName>
    </recommendedName>
    <alternativeName>
        <fullName evidence="2">50S ribosomal protein L14</fullName>
    </alternativeName>
</protein>
<name>RL14_ECOSE</name>
<reference key="1">
    <citation type="journal article" date="2008" name="DNA Res.">
        <title>Complete genome sequence and comparative analysis of the wild-type commensal Escherichia coli strain SE11 isolated from a healthy adult.</title>
        <authorList>
            <person name="Oshima K."/>
            <person name="Toh H."/>
            <person name="Ogura Y."/>
            <person name="Sasamoto H."/>
            <person name="Morita H."/>
            <person name="Park S.-H."/>
            <person name="Ooka T."/>
            <person name="Iyoda S."/>
            <person name="Taylor T.D."/>
            <person name="Hayashi T."/>
            <person name="Itoh K."/>
            <person name="Hattori M."/>
        </authorList>
    </citation>
    <scope>NUCLEOTIDE SEQUENCE [LARGE SCALE GENOMIC DNA]</scope>
    <source>
        <strain>SE11</strain>
    </source>
</reference>
<comment type="function">
    <text evidence="1">Binds to 23S rRNA. Forms part of two intersubunit bridges in the 70S ribosome.</text>
</comment>
<comment type="subunit">
    <text evidence="1">Part of the 50S ribosomal subunit. Forms a cluster with proteins L3 and L19. In the 70S ribosome, L14 and L19 interact and together make contacts with the 16S rRNA in bridges B5 and B8.</text>
</comment>
<comment type="similarity">
    <text evidence="1">Belongs to the universal ribosomal protein uL14 family.</text>
</comment>